<accession>Q60722</accession>
<accession>Q60721</accession>
<accession>Q62211</accession>
<accession>Q64072</accession>
<accession>Q80UE8</accession>
<comment type="function">
    <text evidence="6">Transcription factor that binds to the immunoglobulin enhancer Mu-E5/KE5-motif. Involved in the initiation of neuronal differentiation. Activates transcription by binding to the E box (5'-CANNTG-3'). Isoform 2 inhibits MYOD1 activation of the cardiac alpha-actin promoter. Binds to the E-box present in the somatostatin receptor 2 initiator element (SSTR2-INR) to activate transcription. May have a regulatory function in developmental processes as well as during neuronal plasticity.</text>
</comment>
<comment type="subunit">
    <text evidence="1 5 6">Efficient DNA binding requires dimerization with another bHLH protein. Isoform 2 seems to form inactive heterodimers with MYOD1. Interacts with HIVEP2. Interacts with NEUROD2. Interacts with AGBL1 (By similarity). Interacts with BHLHA9.</text>
</comment>
<comment type="interaction">
    <interactant intactId="EBI-310070">
        <id>Q60722</id>
    </interactant>
    <interactant intactId="EBI-8006703">
        <id>O54972</id>
        <label>Cbfa2t3</label>
    </interactant>
    <organismsDiffer>false</organismsDiffer>
    <experiments>2</experiments>
</comment>
<comment type="interaction">
    <interactant intactId="EBI-310070">
        <id>Q60722</id>
    </interactant>
    <interactant intactId="EBI-6272082">
        <id>P70662</id>
        <label>Ldb1</label>
    </interactant>
    <organismsDiffer>false</organismsDiffer>
    <experiments>2</experiments>
</comment>
<comment type="interaction">
    <interactant intactId="EBI-310070">
        <id>Q60722</id>
    </interactant>
    <interactant intactId="EBI-8459555">
        <id>O54826</id>
        <label>Mllt10</label>
    </interactant>
    <organismsDiffer>false</organismsDiffer>
    <experiments>3</experiments>
</comment>
<comment type="subcellular location">
    <subcellularLocation>
        <location evidence="9">Nucleus</location>
    </subcellularLocation>
</comment>
<comment type="alternative products">
    <event type="alternative splicing"/>
    <isoform>
        <id>Q60722-1</id>
        <name>2</name>
        <name>MITF-2B</name>
        <sequence type="displayed"/>
    </isoform>
    <isoform>
        <id>Q60722-2</id>
        <name>1</name>
        <name>MITF-2A</name>
        <sequence type="described" ref="VSP_002113 VSP_002114"/>
    </isoform>
    <isoform>
        <id>Q60722-3</id>
        <name>3</name>
        <name>MITF-2B-delta</name>
        <sequence type="described" ref="VSP_002115"/>
    </isoform>
</comment>
<comment type="tissue specificity">
    <text>Expressed in the cerebral cortex, Purkinje and granule cell layers of the cerebellum, olfactory neuroepithelium, pyramidal cells of hippocampal layers CA1-CA4, and in the granular cells of the dentate gyrus.</text>
</comment>
<comment type="developmental stage">
    <text>Expressed in proliferative zones during development and in the adult in areas of neuronal plasticity. At 12 dpc, expression is localized in the cortex, cerebellum, pons, medulla and spinal cord. From 18 dpc to adulthood, high levels of expression are found in the pyramidal cells of hippocampal layers CA1-CA4, and in the granular cells of the dentate gyrus. At postnatal day 7, expression is high in the visual cortex and in the subependymal region extending from the anterior lateral ventricle into the olfactory bulb.</text>
</comment>
<protein>
    <recommendedName>
        <fullName>Transcription factor 4</fullName>
        <shortName>TCF-4</shortName>
    </recommendedName>
    <alternativeName>
        <fullName>Class A helix-loop-helix transcription factor ME2</fullName>
    </alternativeName>
    <alternativeName>
        <fullName>Immunoglobulin transcription factor 2</fullName>
        <shortName>ITF-2</shortName>
        <shortName>MITF-2</shortName>
    </alternativeName>
    <alternativeName>
        <fullName>SL3-3 enhancer factor 2</fullName>
        <shortName>SEF-2</shortName>
    </alternativeName>
</protein>
<gene>
    <name type="primary">Tcf4</name>
    <name type="synonym">Itf2</name>
    <name type="synonym">Sef2</name>
</gene>
<evidence type="ECO:0000250" key="1">
    <source>
        <dbReference type="UniProtKB" id="P15884"/>
    </source>
</evidence>
<evidence type="ECO:0000250" key="2">
    <source>
        <dbReference type="UniProtKB" id="Q62655"/>
    </source>
</evidence>
<evidence type="ECO:0000255" key="3">
    <source>
        <dbReference type="PROSITE-ProRule" id="PRU00981"/>
    </source>
</evidence>
<evidence type="ECO:0000256" key="4">
    <source>
        <dbReference type="SAM" id="MobiDB-lite"/>
    </source>
</evidence>
<evidence type="ECO:0000269" key="5">
    <source>
    </source>
</evidence>
<evidence type="ECO:0000269" key="6">
    <source>
    </source>
</evidence>
<evidence type="ECO:0000303" key="7">
    <source>
    </source>
</evidence>
<evidence type="ECO:0000303" key="8">
    <source>
    </source>
</evidence>
<evidence type="ECO:0000305" key="9"/>
<evidence type="ECO:0007744" key="10">
    <source>
    </source>
</evidence>
<keyword id="KW-0010">Activator</keyword>
<keyword id="KW-0025">Alternative splicing</keyword>
<keyword id="KW-0217">Developmental protein</keyword>
<keyword id="KW-0221">Differentiation</keyword>
<keyword id="KW-0238">DNA-binding</keyword>
<keyword id="KW-0524">Neurogenesis</keyword>
<keyword id="KW-0539">Nucleus</keyword>
<keyword id="KW-0597">Phosphoprotein</keyword>
<keyword id="KW-1185">Reference proteome</keyword>
<keyword id="KW-0804">Transcription</keyword>
<keyword id="KW-0805">Transcription regulation</keyword>
<dbReference type="EMBL" id="S75870">
    <property type="protein sequence ID" value="AAB32662.1"/>
    <property type="molecule type" value="mRNA"/>
</dbReference>
<dbReference type="EMBL" id="U16321">
    <property type="protein sequence ID" value="AAC52414.1"/>
    <property type="molecule type" value="mRNA"/>
</dbReference>
<dbReference type="EMBL" id="U16322">
    <property type="protein sequence ID" value="AAC52415.1"/>
    <property type="molecule type" value="mRNA"/>
</dbReference>
<dbReference type="EMBL" id="X91753">
    <property type="protein sequence ID" value="CAA62868.1"/>
    <property type="molecule type" value="mRNA"/>
</dbReference>
<dbReference type="EMBL" id="AK081012">
    <property type="protein sequence ID" value="BAC38116.1"/>
    <property type="molecule type" value="mRNA"/>
</dbReference>
<dbReference type="EMBL" id="BC043050">
    <property type="protein sequence ID" value="AAH43050.1"/>
    <property type="molecule type" value="mRNA"/>
</dbReference>
<dbReference type="CCDS" id="CCDS29329.1">
    <molecule id="Q60722-1"/>
</dbReference>
<dbReference type="CCDS" id="CCDS50315.1">
    <molecule id="Q60722-3"/>
</dbReference>
<dbReference type="PIR" id="I52648">
    <property type="entry name" value="I52648"/>
</dbReference>
<dbReference type="RefSeq" id="NP_001077436.1">
    <molecule id="Q60722-3"/>
    <property type="nucleotide sequence ID" value="NM_001083967.1"/>
</dbReference>
<dbReference type="RefSeq" id="NP_001348055.1">
    <molecule id="Q60722-3"/>
    <property type="nucleotide sequence ID" value="NM_001361126.1"/>
</dbReference>
<dbReference type="RefSeq" id="NP_001348056.1">
    <molecule id="Q60722-1"/>
    <property type="nucleotide sequence ID" value="NM_001361127.1"/>
</dbReference>
<dbReference type="RefSeq" id="NP_038713.1">
    <molecule id="Q60722-1"/>
    <property type="nucleotide sequence ID" value="NM_013685.2"/>
</dbReference>
<dbReference type="RefSeq" id="XP_006525809.1">
    <molecule id="Q60722-1"/>
    <property type="nucleotide sequence ID" value="XM_006525746.5"/>
</dbReference>
<dbReference type="RefSeq" id="XP_006525810.1">
    <property type="nucleotide sequence ID" value="XM_006525747.3"/>
</dbReference>
<dbReference type="RefSeq" id="XP_006525813.1">
    <property type="nucleotide sequence ID" value="XM_006525750.3"/>
</dbReference>
<dbReference type="RefSeq" id="XP_006525823.1">
    <molecule id="Q60722-2"/>
    <property type="nucleotide sequence ID" value="XM_006525760.4"/>
</dbReference>
<dbReference type="RefSeq" id="XP_006525825.1">
    <property type="nucleotide sequence ID" value="XM_006525762.3"/>
</dbReference>
<dbReference type="RefSeq" id="XP_017173346.1">
    <molecule id="Q60722-3"/>
    <property type="nucleotide sequence ID" value="XM_017317857.2"/>
</dbReference>
<dbReference type="RefSeq" id="XP_036016942.1">
    <molecule id="Q60722-1"/>
    <property type="nucleotide sequence ID" value="XM_036161049.1"/>
</dbReference>
<dbReference type="BMRB" id="Q60722"/>
<dbReference type="BioGRID" id="204006">
    <property type="interactions" value="18"/>
</dbReference>
<dbReference type="DIP" id="DIP-42841N"/>
<dbReference type="FunCoup" id="Q60722">
    <property type="interactions" value="2080"/>
</dbReference>
<dbReference type="IntAct" id="Q60722">
    <property type="interactions" value="31"/>
</dbReference>
<dbReference type="MINT" id="Q60722"/>
<dbReference type="STRING" id="10090.ENSMUSP00000110636"/>
<dbReference type="GlyGen" id="Q60722">
    <property type="glycosylation" value="1 site, 1 O-linked glycan (1 site)"/>
</dbReference>
<dbReference type="iPTMnet" id="Q60722"/>
<dbReference type="PhosphoSitePlus" id="Q60722"/>
<dbReference type="jPOST" id="Q60722"/>
<dbReference type="PaxDb" id="10090-ENSMUSP00000110636"/>
<dbReference type="PeptideAtlas" id="Q60722"/>
<dbReference type="ProteomicsDB" id="268903">
    <molecule id="Q60722-1"/>
</dbReference>
<dbReference type="ProteomicsDB" id="268904">
    <molecule id="Q60722-2"/>
</dbReference>
<dbReference type="ProteomicsDB" id="268905">
    <molecule id="Q60722-3"/>
</dbReference>
<dbReference type="Pumba" id="Q60722"/>
<dbReference type="Antibodypedia" id="9596">
    <property type="antibodies" value="411 antibodies from 34 providers"/>
</dbReference>
<dbReference type="DNASU" id="21413"/>
<dbReference type="Ensembl" id="ENSMUST00000078486.13">
    <molecule id="Q60722-1"/>
    <property type="protein sequence ID" value="ENSMUSP00000077577.7"/>
    <property type="gene ID" value="ENSMUSG00000053477.19"/>
</dbReference>
<dbReference type="Ensembl" id="ENSMUST00000114978.9">
    <molecule id="Q60722-2"/>
    <property type="protein sequence ID" value="ENSMUSP00000110629.3"/>
    <property type="gene ID" value="ENSMUSG00000053477.19"/>
</dbReference>
<dbReference type="Ensembl" id="ENSMUST00000114980.8">
    <molecule id="Q60722-1"/>
    <property type="protein sequence ID" value="ENSMUSP00000110631.3"/>
    <property type="gene ID" value="ENSMUSG00000053477.19"/>
</dbReference>
<dbReference type="Ensembl" id="ENSMUST00000114982.8">
    <molecule id="Q60722-3"/>
    <property type="protein sequence ID" value="ENSMUSP00000110633.2"/>
    <property type="gene ID" value="ENSMUSG00000053477.19"/>
</dbReference>
<dbReference type="Ensembl" id="ENSMUST00000114985.10">
    <molecule id="Q60722-1"/>
    <property type="protein sequence ID" value="ENSMUSP00000110636.4"/>
    <property type="gene ID" value="ENSMUSG00000053477.19"/>
</dbReference>
<dbReference type="Ensembl" id="ENSMUST00000202116.4">
    <molecule id="Q60722-3"/>
    <property type="protein sequence ID" value="ENSMUSP00000144512.2"/>
    <property type="gene ID" value="ENSMUSG00000053477.19"/>
</dbReference>
<dbReference type="GeneID" id="21413"/>
<dbReference type="KEGG" id="mmu:21413"/>
<dbReference type="UCSC" id="uc008fnq.1">
    <molecule id="Q60722-1"/>
    <property type="organism name" value="mouse"/>
</dbReference>
<dbReference type="UCSC" id="uc008fns.1">
    <molecule id="Q60722-3"/>
    <property type="organism name" value="mouse"/>
</dbReference>
<dbReference type="AGR" id="MGI:98506"/>
<dbReference type="CTD" id="6925"/>
<dbReference type="MGI" id="MGI:98506">
    <property type="gene designation" value="Tcf4"/>
</dbReference>
<dbReference type="VEuPathDB" id="HostDB:ENSMUSG00000053477"/>
<dbReference type="eggNOG" id="KOG3910">
    <property type="taxonomic scope" value="Eukaryota"/>
</dbReference>
<dbReference type="GeneTree" id="ENSGT00940000159129"/>
<dbReference type="InParanoid" id="Q60722"/>
<dbReference type="PhylomeDB" id="Q60722"/>
<dbReference type="TreeFam" id="TF321672"/>
<dbReference type="Reactome" id="R-MMU-525793">
    <property type="pathway name" value="Myogenesis"/>
</dbReference>
<dbReference type="BioGRID-ORCS" id="21413">
    <property type="hits" value="2 hits in 77 CRISPR screens"/>
</dbReference>
<dbReference type="ChiTaRS" id="Tcf4">
    <property type="organism name" value="mouse"/>
</dbReference>
<dbReference type="PRO" id="PR:Q60722"/>
<dbReference type="Proteomes" id="UP000000589">
    <property type="component" value="Chromosome 18"/>
</dbReference>
<dbReference type="RNAct" id="Q60722">
    <property type="molecule type" value="protein"/>
</dbReference>
<dbReference type="Bgee" id="ENSMUSG00000053477">
    <property type="expression patterns" value="Expressed in rostral migratory stream and 292 other cell types or tissues"/>
</dbReference>
<dbReference type="ExpressionAtlas" id="Q60722">
    <property type="expression patterns" value="baseline and differential"/>
</dbReference>
<dbReference type="GO" id="GO:0005634">
    <property type="term" value="C:nucleus"/>
    <property type="evidence" value="ECO:0000314"/>
    <property type="project" value="MGI"/>
</dbReference>
<dbReference type="GO" id="GO:0005667">
    <property type="term" value="C:transcription regulator complex"/>
    <property type="evidence" value="ECO:0000314"/>
    <property type="project" value="BHF-UCL"/>
</dbReference>
<dbReference type="GO" id="GO:0003682">
    <property type="term" value="F:chromatin binding"/>
    <property type="evidence" value="ECO:0000314"/>
    <property type="project" value="MGI"/>
</dbReference>
<dbReference type="GO" id="GO:0003677">
    <property type="term" value="F:DNA binding"/>
    <property type="evidence" value="ECO:0000314"/>
    <property type="project" value="MGI"/>
</dbReference>
<dbReference type="GO" id="GO:0001228">
    <property type="term" value="F:DNA-binding transcription activator activity, RNA polymerase II-specific"/>
    <property type="evidence" value="ECO:0000314"/>
    <property type="project" value="BHF-UCL"/>
</dbReference>
<dbReference type="GO" id="GO:0000981">
    <property type="term" value="F:DNA-binding transcription factor activity, RNA polymerase II-specific"/>
    <property type="evidence" value="ECO:0000314"/>
    <property type="project" value="BHF-UCL"/>
</dbReference>
<dbReference type="GO" id="GO:0070888">
    <property type="term" value="F:E-box binding"/>
    <property type="evidence" value="ECO:0000314"/>
    <property type="project" value="UniProtKB"/>
</dbReference>
<dbReference type="GO" id="GO:0042802">
    <property type="term" value="F:identical protein binding"/>
    <property type="evidence" value="ECO:0000315"/>
    <property type="project" value="MGI"/>
</dbReference>
<dbReference type="GO" id="GO:0046982">
    <property type="term" value="F:protein heterodimerization activity"/>
    <property type="evidence" value="ECO:0000314"/>
    <property type="project" value="UniProtKB"/>
</dbReference>
<dbReference type="GO" id="GO:0000978">
    <property type="term" value="F:RNA polymerase II cis-regulatory region sequence-specific DNA binding"/>
    <property type="evidence" value="ECO:0000314"/>
    <property type="project" value="BHF-UCL"/>
</dbReference>
<dbReference type="GO" id="GO:0000977">
    <property type="term" value="F:RNA polymerase II transcription regulatory region sequence-specific DNA binding"/>
    <property type="evidence" value="ECO:0000315"/>
    <property type="project" value="UniProtKB"/>
</dbReference>
<dbReference type="GO" id="GO:0001093">
    <property type="term" value="F:TFIIB-class transcription factor binding"/>
    <property type="evidence" value="ECO:0000314"/>
    <property type="project" value="BHF-UCL"/>
</dbReference>
<dbReference type="GO" id="GO:0003714">
    <property type="term" value="F:transcription corepressor activity"/>
    <property type="evidence" value="ECO:0000314"/>
    <property type="project" value="MGI"/>
</dbReference>
<dbReference type="GO" id="GO:0030154">
    <property type="term" value="P:cell differentiation"/>
    <property type="evidence" value="ECO:0007669"/>
    <property type="project" value="UniProtKB-KW"/>
</dbReference>
<dbReference type="GO" id="GO:0042118">
    <property type="term" value="P:endothelial cell activation"/>
    <property type="evidence" value="ECO:0000314"/>
    <property type="project" value="MGI"/>
</dbReference>
<dbReference type="GO" id="GO:0016525">
    <property type="term" value="P:negative regulation of angiogenesis"/>
    <property type="evidence" value="ECO:0000314"/>
    <property type="project" value="MGI"/>
</dbReference>
<dbReference type="GO" id="GO:0010629">
    <property type="term" value="P:negative regulation of gene expression"/>
    <property type="evidence" value="ECO:0000314"/>
    <property type="project" value="MGI"/>
</dbReference>
<dbReference type="GO" id="GO:0000122">
    <property type="term" value="P:negative regulation of transcription by RNA polymerase II"/>
    <property type="evidence" value="ECO:0000314"/>
    <property type="project" value="MGI"/>
</dbReference>
<dbReference type="GO" id="GO:0007399">
    <property type="term" value="P:nervous system development"/>
    <property type="evidence" value="ECO:0007669"/>
    <property type="project" value="UniProtKB-KW"/>
</dbReference>
<dbReference type="GO" id="GO:0045666">
    <property type="term" value="P:positive regulation of neuron differentiation"/>
    <property type="evidence" value="ECO:0000314"/>
    <property type="project" value="UniProtKB"/>
</dbReference>
<dbReference type="GO" id="GO:0045944">
    <property type="term" value="P:positive regulation of transcription by RNA polymerase II"/>
    <property type="evidence" value="ECO:0000314"/>
    <property type="project" value="BHF-UCL"/>
</dbReference>
<dbReference type="GO" id="GO:0065004">
    <property type="term" value="P:protein-DNA complex assembly"/>
    <property type="evidence" value="ECO:0000314"/>
    <property type="project" value="BHF-UCL"/>
</dbReference>
<dbReference type="GO" id="GO:0006355">
    <property type="term" value="P:regulation of DNA-templated transcription"/>
    <property type="evidence" value="ECO:0000314"/>
    <property type="project" value="MGI"/>
</dbReference>
<dbReference type="GO" id="GO:1900746">
    <property type="term" value="P:regulation of vascular endothelial growth factor signaling pathway"/>
    <property type="evidence" value="ECO:0000314"/>
    <property type="project" value="MGI"/>
</dbReference>
<dbReference type="CDD" id="cd18945">
    <property type="entry name" value="bHLH_E-protein_TCF4_E2-2"/>
    <property type="match status" value="1"/>
</dbReference>
<dbReference type="FunFam" id="4.10.280.10:FF:000001">
    <property type="entry name" value="Putative transcription factor 12"/>
    <property type="match status" value="1"/>
</dbReference>
<dbReference type="Gene3D" id="4.10.280.10">
    <property type="entry name" value="Helix-loop-helix DNA-binding domain"/>
    <property type="match status" value="1"/>
</dbReference>
<dbReference type="InterPro" id="IPR011598">
    <property type="entry name" value="bHLH_dom"/>
</dbReference>
<dbReference type="InterPro" id="IPR036638">
    <property type="entry name" value="HLH_DNA-bd_sf"/>
</dbReference>
<dbReference type="InterPro" id="IPR051098">
    <property type="entry name" value="NeuroDiff_E-box_TFs"/>
</dbReference>
<dbReference type="PANTHER" id="PTHR11793">
    <property type="entry name" value="BASIC HELIX-LOOP-HELIX TRANSCRIPTION FACTOR"/>
    <property type="match status" value="1"/>
</dbReference>
<dbReference type="PANTHER" id="PTHR11793:SF10">
    <property type="entry name" value="TRANSCRIPTION FACTOR 4"/>
    <property type="match status" value="1"/>
</dbReference>
<dbReference type="Pfam" id="PF00010">
    <property type="entry name" value="HLH"/>
    <property type="match status" value="1"/>
</dbReference>
<dbReference type="SMART" id="SM00353">
    <property type="entry name" value="HLH"/>
    <property type="match status" value="1"/>
</dbReference>
<dbReference type="SUPFAM" id="SSF47459">
    <property type="entry name" value="HLH, helix-loop-helix DNA-binding domain"/>
    <property type="match status" value="1"/>
</dbReference>
<dbReference type="PROSITE" id="PS50888">
    <property type="entry name" value="BHLH"/>
    <property type="match status" value="1"/>
</dbReference>
<organism>
    <name type="scientific">Mus musculus</name>
    <name type="common">Mouse</name>
    <dbReference type="NCBI Taxonomy" id="10090"/>
    <lineage>
        <taxon>Eukaryota</taxon>
        <taxon>Metazoa</taxon>
        <taxon>Chordata</taxon>
        <taxon>Craniata</taxon>
        <taxon>Vertebrata</taxon>
        <taxon>Euteleostomi</taxon>
        <taxon>Mammalia</taxon>
        <taxon>Eutheria</taxon>
        <taxon>Euarchontoglires</taxon>
        <taxon>Glires</taxon>
        <taxon>Rodentia</taxon>
        <taxon>Myomorpha</taxon>
        <taxon>Muroidea</taxon>
        <taxon>Muridae</taxon>
        <taxon>Murinae</taxon>
        <taxon>Mus</taxon>
        <taxon>Mus</taxon>
    </lineage>
</organism>
<feature type="chain" id="PRO_0000127257" description="Transcription factor 4">
    <location>
        <begin position="1"/>
        <end position="670"/>
    </location>
</feature>
<feature type="domain" description="bHLH" evidence="3">
    <location>
        <begin position="567"/>
        <end position="620"/>
    </location>
</feature>
<feature type="region of interest" description="Essential for MYOD1 inhibition">
    <location>
        <begin position="1"/>
        <end position="83"/>
    </location>
</feature>
<feature type="region of interest" description="Disordered" evidence="4">
    <location>
        <begin position="24"/>
        <end position="244"/>
    </location>
</feature>
<feature type="region of interest" description="Disordered" evidence="4">
    <location>
        <begin position="262"/>
        <end position="320"/>
    </location>
</feature>
<feature type="region of interest" description="Disordered" evidence="4">
    <location>
        <begin position="335"/>
        <end position="378"/>
    </location>
</feature>
<feature type="region of interest" description="Leucine-zipper">
    <location>
        <begin position="378"/>
        <end position="399"/>
    </location>
</feature>
<feature type="region of interest" description="Disordered" evidence="4">
    <location>
        <begin position="406"/>
        <end position="426"/>
    </location>
</feature>
<feature type="region of interest" description="Disordered" evidence="4">
    <location>
        <begin position="465"/>
        <end position="573"/>
    </location>
</feature>
<feature type="region of interest" description="Class A specific domain">
    <location>
        <begin position="622"/>
        <end position="645"/>
    </location>
</feature>
<feature type="region of interest" description="Disordered" evidence="4">
    <location>
        <begin position="637"/>
        <end position="670"/>
    </location>
</feature>
<feature type="compositionally biased region" description="Polar residues" evidence="4">
    <location>
        <begin position="29"/>
        <end position="49"/>
    </location>
</feature>
<feature type="compositionally biased region" description="Polar residues" evidence="4">
    <location>
        <begin position="107"/>
        <end position="125"/>
    </location>
</feature>
<feature type="compositionally biased region" description="Polar residues" evidence="4">
    <location>
        <begin position="136"/>
        <end position="154"/>
    </location>
</feature>
<feature type="compositionally biased region" description="Polar residues" evidence="4">
    <location>
        <begin position="205"/>
        <end position="215"/>
    </location>
</feature>
<feature type="compositionally biased region" description="Polar residues" evidence="4">
    <location>
        <begin position="265"/>
        <end position="305"/>
    </location>
</feature>
<feature type="compositionally biased region" description="Low complexity" evidence="4">
    <location>
        <begin position="336"/>
        <end position="347"/>
    </location>
</feature>
<feature type="compositionally biased region" description="Polar residues" evidence="4">
    <location>
        <begin position="364"/>
        <end position="373"/>
    </location>
</feature>
<feature type="compositionally biased region" description="Low complexity" evidence="4">
    <location>
        <begin position="466"/>
        <end position="479"/>
    </location>
</feature>
<feature type="compositionally biased region" description="Low complexity" evidence="4">
    <location>
        <begin position="502"/>
        <end position="511"/>
    </location>
</feature>
<feature type="compositionally biased region" description="Basic and acidic residues" evidence="4">
    <location>
        <begin position="526"/>
        <end position="542"/>
    </location>
</feature>
<feature type="compositionally biased region" description="Basic and acidic residues" evidence="4">
    <location>
        <begin position="558"/>
        <end position="573"/>
    </location>
</feature>
<feature type="modified residue" description="Phosphoserine" evidence="1">
    <location>
        <position position="66"/>
    </location>
</feature>
<feature type="modified residue" description="Phosphoserine" evidence="1">
    <location>
        <position position="87"/>
    </location>
</feature>
<feature type="modified residue" description="Phosphoserine" evidence="1">
    <location>
        <position position="92"/>
    </location>
</feature>
<feature type="modified residue" description="Phosphoserine" evidence="2">
    <location>
        <position position="371"/>
    </location>
</feature>
<feature type="modified residue" description="Phosphoserine" evidence="10">
    <location>
        <position position="514"/>
    </location>
</feature>
<feature type="splice variant" id="VSP_002113" description="In isoform 1." evidence="8">
    <location>
        <begin position="1"/>
        <end position="159"/>
    </location>
</feature>
<feature type="splice variant" id="VSP_002114" description="In isoform 1." evidence="8">
    <original>LHSSAMEVQTKKVRKVPPGLPSS</original>
    <variation>MYCAYTIPGMGGNSLMYYYNGKA</variation>
    <location>
        <begin position="160"/>
        <end position="182"/>
    </location>
</feature>
<feature type="splice variant" id="VSP_002115" description="In isoform 3." evidence="7 8">
    <location>
        <begin position="545"/>
        <end position="548"/>
    </location>
</feature>
<feature type="sequence conflict" description="In Ref. 3; CAA62868." evidence="9" ref="3">
    <original>P</original>
    <variation>S</variation>
    <location>
        <position position="159"/>
    </location>
</feature>
<feature type="sequence conflict" description="In Ref. 3; CAA62868." evidence="9" ref="3">
    <original>P</original>
    <variation>A</variation>
    <location>
        <position position="180"/>
    </location>
</feature>
<feature type="sequence conflict" description="In Ref. 1; AAB32662." evidence="9" ref="1">
    <original>G</original>
    <variation>A</variation>
    <location>
        <position position="238"/>
    </location>
</feature>
<sequence length="670" mass="71625">MHHQQRMAALGTDKELSDLLDFSAMFSPPVSSGKNGPTSLASGHFTGSNVEDRSSSGSWGTGGHPSPSRNYGDGTPYDHMTSRDLGSHDNLSPPFVNSRIQSKTERGSYSSYGRENVQGCHQQSLLGGDMDMGNPGTLSPTKPGSQYYQYSSNNARRRPLHSSAMEVQTKKVRKVPPGLPSSVYAPSASTADYNRDSPGYPSSKPAASTFPSSFFMQDGHHSSDPWSSSSGMNQPGYGGMLGNSSHIPQSSSYCSLHPHERLSYPSHSSADINSSLPPMSTFHRSGTNHYSTSSCTPPANGTDSIMANRGTGAAGSSQTGDALGKALASIYSPDHTNNSFSSNPSTPVGSPPSLSAGTAVWSRNGGQASSSPNYEGPLHSLQSRIEDRLERLDDAIHVLRNHAVGPSTAVPGGHGDMHGIMGPSHNGAMGSLGSGYGTSLLSANRHSLMVGAHREDGVALRGSHSLLPNQVPVPQLPVQSATSPDLNPPQDPYRGMPPGLQGQSVSSGSSEIKSDDEGDENLQDTKSSEDKKLDDDKKDIKSITRSRSSNNDDEDLTPEQKAEREKERRMANNARERLRVRDINEAFKELGRMVQLHLKSDKPQTKLLILHQAVAVILSLEQQVRERNLNPKAACLKRREEEKVSSEPPPLSLAGPHPGMGDAANHMGQM</sequence>
<proteinExistence type="evidence at protein level"/>
<reference key="1">
    <citation type="journal article" date="1994" name="Brain Res. Mol. Brain Res.">
        <title>Expression of basic-helix-loop-helix transcription factor ME2 during brain development and in the regions of neuronal plasticity in the adult brain.</title>
        <authorList>
            <person name="Soosaar A."/>
            <person name="Chiaramello A."/>
            <person name="Zuber M.X."/>
            <person name="Neuman T."/>
        </authorList>
    </citation>
    <scope>NUCLEOTIDE SEQUENCE [MRNA] (ISOFORM 2)</scope>
    <source>
        <tissue>Brain</tissue>
    </source>
</reference>
<reference key="2">
    <citation type="journal article" date="1996" name="J. Biol. Chem.">
        <title>A splice variant of the ITF-2 transcript encodes a transcription factor that inhibits MyoD activity.</title>
        <authorList>
            <person name="Skerjanc I.S."/>
            <person name="Truong J."/>
            <person name="Filion P."/>
            <person name="McBurney M.W."/>
        </authorList>
    </citation>
    <scope>NUCLEOTIDE SEQUENCE [MRNA] (ISOFORMS 1; 2 AND 3)</scope>
</reference>
<reference key="3">
    <citation type="journal article" date="1996" name="EMBO J.">
        <title>The helix-loop-helix transcription factor SEF-2 regulates the activity of a novel initiator element in the promoter of the human somatostatin receptor II gene.</title>
        <authorList>
            <person name="Pscherer A."/>
            <person name="Doerflinger U."/>
            <person name="Kirfel J."/>
            <person name="Gawlas K."/>
            <person name="Rueschoff J."/>
            <person name="Buettner R."/>
            <person name="Schuele R."/>
        </authorList>
    </citation>
    <scope>NUCLEOTIDE SEQUENCE [MRNA] (ISOFORM 2)</scope>
    <source>
        <strain>BALB/cJ</strain>
        <tissue>Brain</tissue>
    </source>
</reference>
<reference key="4">
    <citation type="journal article" date="2005" name="Science">
        <title>The transcriptional landscape of the mammalian genome.</title>
        <authorList>
            <person name="Carninci P."/>
            <person name="Kasukawa T."/>
            <person name="Katayama S."/>
            <person name="Gough J."/>
            <person name="Frith M.C."/>
            <person name="Maeda N."/>
            <person name="Oyama R."/>
            <person name="Ravasi T."/>
            <person name="Lenhard B."/>
            <person name="Wells C."/>
            <person name="Kodzius R."/>
            <person name="Shimokawa K."/>
            <person name="Bajic V.B."/>
            <person name="Brenner S.E."/>
            <person name="Batalov S."/>
            <person name="Forrest A.R."/>
            <person name="Zavolan M."/>
            <person name="Davis M.J."/>
            <person name="Wilming L.G."/>
            <person name="Aidinis V."/>
            <person name="Allen J.E."/>
            <person name="Ambesi-Impiombato A."/>
            <person name="Apweiler R."/>
            <person name="Aturaliya R.N."/>
            <person name="Bailey T.L."/>
            <person name="Bansal M."/>
            <person name="Baxter L."/>
            <person name="Beisel K.W."/>
            <person name="Bersano T."/>
            <person name="Bono H."/>
            <person name="Chalk A.M."/>
            <person name="Chiu K.P."/>
            <person name="Choudhary V."/>
            <person name="Christoffels A."/>
            <person name="Clutterbuck D.R."/>
            <person name="Crowe M.L."/>
            <person name="Dalla E."/>
            <person name="Dalrymple B.P."/>
            <person name="de Bono B."/>
            <person name="Della Gatta G."/>
            <person name="di Bernardo D."/>
            <person name="Down T."/>
            <person name="Engstrom P."/>
            <person name="Fagiolini M."/>
            <person name="Faulkner G."/>
            <person name="Fletcher C.F."/>
            <person name="Fukushima T."/>
            <person name="Furuno M."/>
            <person name="Futaki S."/>
            <person name="Gariboldi M."/>
            <person name="Georgii-Hemming P."/>
            <person name="Gingeras T.R."/>
            <person name="Gojobori T."/>
            <person name="Green R.E."/>
            <person name="Gustincich S."/>
            <person name="Harbers M."/>
            <person name="Hayashi Y."/>
            <person name="Hensch T.K."/>
            <person name="Hirokawa N."/>
            <person name="Hill D."/>
            <person name="Huminiecki L."/>
            <person name="Iacono M."/>
            <person name="Ikeo K."/>
            <person name="Iwama A."/>
            <person name="Ishikawa T."/>
            <person name="Jakt M."/>
            <person name="Kanapin A."/>
            <person name="Katoh M."/>
            <person name="Kawasawa Y."/>
            <person name="Kelso J."/>
            <person name="Kitamura H."/>
            <person name="Kitano H."/>
            <person name="Kollias G."/>
            <person name="Krishnan S.P."/>
            <person name="Kruger A."/>
            <person name="Kummerfeld S.K."/>
            <person name="Kurochkin I.V."/>
            <person name="Lareau L.F."/>
            <person name="Lazarevic D."/>
            <person name="Lipovich L."/>
            <person name="Liu J."/>
            <person name="Liuni S."/>
            <person name="McWilliam S."/>
            <person name="Madan Babu M."/>
            <person name="Madera M."/>
            <person name="Marchionni L."/>
            <person name="Matsuda H."/>
            <person name="Matsuzawa S."/>
            <person name="Miki H."/>
            <person name="Mignone F."/>
            <person name="Miyake S."/>
            <person name="Morris K."/>
            <person name="Mottagui-Tabar S."/>
            <person name="Mulder N."/>
            <person name="Nakano N."/>
            <person name="Nakauchi H."/>
            <person name="Ng P."/>
            <person name="Nilsson R."/>
            <person name="Nishiguchi S."/>
            <person name="Nishikawa S."/>
            <person name="Nori F."/>
            <person name="Ohara O."/>
            <person name="Okazaki Y."/>
            <person name="Orlando V."/>
            <person name="Pang K.C."/>
            <person name="Pavan W.J."/>
            <person name="Pavesi G."/>
            <person name="Pesole G."/>
            <person name="Petrovsky N."/>
            <person name="Piazza S."/>
            <person name="Reed J."/>
            <person name="Reid J.F."/>
            <person name="Ring B.Z."/>
            <person name="Ringwald M."/>
            <person name="Rost B."/>
            <person name="Ruan Y."/>
            <person name="Salzberg S.L."/>
            <person name="Sandelin A."/>
            <person name="Schneider C."/>
            <person name="Schoenbach C."/>
            <person name="Sekiguchi K."/>
            <person name="Semple C.A."/>
            <person name="Seno S."/>
            <person name="Sessa L."/>
            <person name="Sheng Y."/>
            <person name="Shibata Y."/>
            <person name="Shimada H."/>
            <person name="Shimada K."/>
            <person name="Silva D."/>
            <person name="Sinclair B."/>
            <person name="Sperling S."/>
            <person name="Stupka E."/>
            <person name="Sugiura K."/>
            <person name="Sultana R."/>
            <person name="Takenaka Y."/>
            <person name="Taki K."/>
            <person name="Tammoja K."/>
            <person name="Tan S.L."/>
            <person name="Tang S."/>
            <person name="Taylor M.S."/>
            <person name="Tegner J."/>
            <person name="Teichmann S.A."/>
            <person name="Ueda H.R."/>
            <person name="van Nimwegen E."/>
            <person name="Verardo R."/>
            <person name="Wei C.L."/>
            <person name="Yagi K."/>
            <person name="Yamanishi H."/>
            <person name="Zabarovsky E."/>
            <person name="Zhu S."/>
            <person name="Zimmer A."/>
            <person name="Hide W."/>
            <person name="Bult C."/>
            <person name="Grimmond S.M."/>
            <person name="Teasdale R.D."/>
            <person name="Liu E.T."/>
            <person name="Brusic V."/>
            <person name="Quackenbush J."/>
            <person name="Wahlestedt C."/>
            <person name="Mattick J.S."/>
            <person name="Hume D.A."/>
            <person name="Kai C."/>
            <person name="Sasaki D."/>
            <person name="Tomaru Y."/>
            <person name="Fukuda S."/>
            <person name="Kanamori-Katayama M."/>
            <person name="Suzuki M."/>
            <person name="Aoki J."/>
            <person name="Arakawa T."/>
            <person name="Iida J."/>
            <person name="Imamura K."/>
            <person name="Itoh M."/>
            <person name="Kato T."/>
            <person name="Kawaji H."/>
            <person name="Kawagashira N."/>
            <person name="Kawashima T."/>
            <person name="Kojima M."/>
            <person name="Kondo S."/>
            <person name="Konno H."/>
            <person name="Nakano K."/>
            <person name="Ninomiya N."/>
            <person name="Nishio T."/>
            <person name="Okada M."/>
            <person name="Plessy C."/>
            <person name="Shibata K."/>
            <person name="Shiraki T."/>
            <person name="Suzuki S."/>
            <person name="Tagami M."/>
            <person name="Waki K."/>
            <person name="Watahiki A."/>
            <person name="Okamura-Oho Y."/>
            <person name="Suzuki H."/>
            <person name="Kawai J."/>
            <person name="Hayashizaki Y."/>
        </authorList>
    </citation>
    <scope>NUCLEOTIDE SEQUENCE [LARGE SCALE MRNA] (ISOFORM 3)</scope>
    <source>
        <strain>C57BL/6J</strain>
        <tissue>Head</tissue>
    </source>
</reference>
<reference key="5">
    <citation type="journal article" date="2004" name="Genome Res.">
        <title>The status, quality, and expansion of the NIH full-length cDNA project: the Mammalian Gene Collection (MGC).</title>
        <authorList>
            <consortium name="The MGC Project Team"/>
        </authorList>
    </citation>
    <scope>NUCLEOTIDE SEQUENCE [LARGE SCALE MRNA] (ISOFORM 2)</scope>
    <source>
        <strain>C57BL/6J</strain>
        <tissue>Brain</tissue>
    </source>
</reference>
<reference key="6">
    <citation type="journal article" date="1999" name="Mol. Cell. Biol.">
        <title>Activation of somatostatin receptor II expression by transcription factors MIBP1 and SEF-2 in the murine brain.</title>
        <authorList>
            <person name="Doerflinger U."/>
            <person name="Pscherer A."/>
            <person name="Moser M."/>
            <person name="Ruemmele P."/>
            <person name="Schuele R."/>
            <person name="Buettner R."/>
        </authorList>
    </citation>
    <scope>INTERACTION WITH HIVEP2</scope>
    <source>
        <tissue>Brain</tissue>
    </source>
</reference>
<reference key="7">
    <citation type="journal article" date="2008" name="J. Neurosci. Res.">
        <title>E protein dosage influences brain development more than family member identity.</title>
        <authorList>
            <person name="Ravanpay A.C."/>
            <person name="Olson J.M."/>
        </authorList>
    </citation>
    <scope>FUNCTION</scope>
    <scope>INTERACTION WITH NEUROD2</scope>
    <scope>DNA-BINDING</scope>
</reference>
<reference key="8">
    <citation type="journal article" date="2010" name="Cell">
        <title>A tissue-specific atlas of mouse protein phosphorylation and expression.</title>
        <authorList>
            <person name="Huttlin E.L."/>
            <person name="Jedrychowski M.P."/>
            <person name="Elias J.E."/>
            <person name="Goswami T."/>
            <person name="Rad R."/>
            <person name="Beausoleil S.A."/>
            <person name="Villen J."/>
            <person name="Haas W."/>
            <person name="Sowa M.E."/>
            <person name="Gygi S.P."/>
        </authorList>
    </citation>
    <scope>PHOSPHORYLATION [LARGE SCALE ANALYSIS] AT SER-514</scope>
    <scope>IDENTIFICATION BY MASS SPECTROMETRY [LARGE SCALE ANALYSIS]</scope>
    <source>
        <tissue>Brain</tissue>
        <tissue>Kidney</tissue>
        <tissue>Spleen</tissue>
    </source>
</reference>
<name>ITF2_MOUSE</name>